<organism>
    <name type="scientific">Pseudoalteromonas translucida (strain TAC 125)</name>
    <dbReference type="NCBI Taxonomy" id="326442"/>
    <lineage>
        <taxon>Bacteria</taxon>
        <taxon>Pseudomonadati</taxon>
        <taxon>Pseudomonadota</taxon>
        <taxon>Gammaproteobacteria</taxon>
        <taxon>Alteromonadales</taxon>
        <taxon>Pseudoalteromonadaceae</taxon>
        <taxon>Pseudoalteromonas</taxon>
    </lineage>
</organism>
<proteinExistence type="inferred from homology"/>
<reference key="1">
    <citation type="journal article" date="2005" name="Genome Res.">
        <title>Coping with cold: the genome of the versatile marine Antarctica bacterium Pseudoalteromonas haloplanktis TAC125.</title>
        <authorList>
            <person name="Medigue C."/>
            <person name="Krin E."/>
            <person name="Pascal G."/>
            <person name="Barbe V."/>
            <person name="Bernsel A."/>
            <person name="Bertin P.N."/>
            <person name="Cheung F."/>
            <person name="Cruveiller S."/>
            <person name="D'Amico S."/>
            <person name="Duilio A."/>
            <person name="Fang G."/>
            <person name="Feller G."/>
            <person name="Ho C."/>
            <person name="Mangenot S."/>
            <person name="Marino G."/>
            <person name="Nilsson J."/>
            <person name="Parrilli E."/>
            <person name="Rocha E.P.C."/>
            <person name="Rouy Z."/>
            <person name="Sekowska A."/>
            <person name="Tutino M.L."/>
            <person name="Vallenet D."/>
            <person name="von Heijne G."/>
            <person name="Danchin A."/>
        </authorList>
    </citation>
    <scope>NUCLEOTIDE SEQUENCE [LARGE SCALE GENOMIC DNA]</scope>
    <source>
        <strain>TAC 125</strain>
    </source>
</reference>
<name>CCME_PSET1</name>
<accession>Q3IE16</accession>
<comment type="function">
    <text evidence="1">Heme chaperone required for the biogenesis of c-type cytochromes. Transiently binds heme delivered by CcmC and transfers the heme to apo-cytochromes in a process facilitated by CcmF and CcmH.</text>
</comment>
<comment type="subcellular location">
    <subcellularLocation>
        <location evidence="1">Cell inner membrane</location>
        <topology evidence="1">Single-pass type II membrane protein</topology>
        <orientation evidence="1">Periplasmic side</orientation>
    </subcellularLocation>
</comment>
<comment type="similarity">
    <text evidence="1">Belongs to the CcmE/CycJ family.</text>
</comment>
<evidence type="ECO:0000255" key="1">
    <source>
        <dbReference type="HAMAP-Rule" id="MF_01959"/>
    </source>
</evidence>
<keyword id="KW-0997">Cell inner membrane</keyword>
<keyword id="KW-1003">Cell membrane</keyword>
<keyword id="KW-0201">Cytochrome c-type biogenesis</keyword>
<keyword id="KW-0349">Heme</keyword>
<keyword id="KW-0408">Iron</keyword>
<keyword id="KW-0472">Membrane</keyword>
<keyword id="KW-0479">Metal-binding</keyword>
<keyword id="KW-1185">Reference proteome</keyword>
<keyword id="KW-0735">Signal-anchor</keyword>
<keyword id="KW-0812">Transmembrane</keyword>
<keyword id="KW-1133">Transmembrane helix</keyword>
<dbReference type="EMBL" id="CR954246">
    <property type="protein sequence ID" value="CAI85907.1"/>
    <property type="molecule type" value="Genomic_DNA"/>
</dbReference>
<dbReference type="SMR" id="Q3IE16"/>
<dbReference type="STRING" id="326442.PSHAa0826"/>
<dbReference type="KEGG" id="pha:PSHAa0826"/>
<dbReference type="PATRIC" id="fig|326442.8.peg.788"/>
<dbReference type="eggNOG" id="COG2332">
    <property type="taxonomic scope" value="Bacteria"/>
</dbReference>
<dbReference type="HOGENOM" id="CLU_079503_1_0_6"/>
<dbReference type="BioCyc" id="PHAL326442:PSHA_RS04030-MONOMER"/>
<dbReference type="Proteomes" id="UP000006843">
    <property type="component" value="Chromosome I"/>
</dbReference>
<dbReference type="GO" id="GO:0005886">
    <property type="term" value="C:plasma membrane"/>
    <property type="evidence" value="ECO:0007669"/>
    <property type="project" value="UniProtKB-SubCell"/>
</dbReference>
<dbReference type="GO" id="GO:0020037">
    <property type="term" value="F:heme binding"/>
    <property type="evidence" value="ECO:0007669"/>
    <property type="project" value="InterPro"/>
</dbReference>
<dbReference type="GO" id="GO:0046872">
    <property type="term" value="F:metal ion binding"/>
    <property type="evidence" value="ECO:0007669"/>
    <property type="project" value="UniProtKB-KW"/>
</dbReference>
<dbReference type="GO" id="GO:0017004">
    <property type="term" value="P:cytochrome complex assembly"/>
    <property type="evidence" value="ECO:0007669"/>
    <property type="project" value="UniProtKB-KW"/>
</dbReference>
<dbReference type="FunFam" id="2.40.50.140:FF:000104">
    <property type="entry name" value="Cytochrome c-type biogenesis protein CcmE"/>
    <property type="match status" value="1"/>
</dbReference>
<dbReference type="Gene3D" id="2.40.50.140">
    <property type="entry name" value="Nucleic acid-binding proteins"/>
    <property type="match status" value="1"/>
</dbReference>
<dbReference type="HAMAP" id="MF_01959">
    <property type="entry name" value="CcmE"/>
    <property type="match status" value="1"/>
</dbReference>
<dbReference type="InterPro" id="IPR004329">
    <property type="entry name" value="CcmE"/>
</dbReference>
<dbReference type="InterPro" id="IPR036127">
    <property type="entry name" value="CcmE-like_sf"/>
</dbReference>
<dbReference type="InterPro" id="IPR012340">
    <property type="entry name" value="NA-bd_OB-fold"/>
</dbReference>
<dbReference type="NCBIfam" id="NF009638">
    <property type="entry name" value="PRK13165.1"/>
    <property type="match status" value="1"/>
</dbReference>
<dbReference type="NCBIfam" id="NF009727">
    <property type="entry name" value="PRK13254.1-1"/>
    <property type="match status" value="1"/>
</dbReference>
<dbReference type="NCBIfam" id="NF009729">
    <property type="entry name" value="PRK13254.1-3"/>
    <property type="match status" value="1"/>
</dbReference>
<dbReference type="NCBIfam" id="NF009731">
    <property type="entry name" value="PRK13254.1-5"/>
    <property type="match status" value="1"/>
</dbReference>
<dbReference type="PANTHER" id="PTHR34128">
    <property type="entry name" value="CYTOCHROME C-TYPE BIOGENESIS PROTEIN CCME HOMOLOG, MITOCHONDRIAL"/>
    <property type="match status" value="1"/>
</dbReference>
<dbReference type="PANTHER" id="PTHR34128:SF2">
    <property type="entry name" value="CYTOCHROME C-TYPE BIOGENESIS PROTEIN CCME HOMOLOG, MITOCHONDRIAL"/>
    <property type="match status" value="1"/>
</dbReference>
<dbReference type="Pfam" id="PF03100">
    <property type="entry name" value="CcmE"/>
    <property type="match status" value="1"/>
</dbReference>
<dbReference type="SUPFAM" id="SSF82093">
    <property type="entry name" value="Heme chaperone CcmE"/>
    <property type="match status" value="1"/>
</dbReference>
<feature type="chain" id="PRO_0000238833" description="Cytochrome c-type biogenesis protein CcmE">
    <location>
        <begin position="1"/>
        <end position="159"/>
    </location>
</feature>
<feature type="topological domain" description="Cytoplasmic" evidence="1">
    <location>
        <begin position="1"/>
        <end position="8"/>
    </location>
</feature>
<feature type="transmembrane region" description="Helical; Signal-anchor for type II membrane protein" evidence="1">
    <location>
        <begin position="9"/>
        <end position="29"/>
    </location>
</feature>
<feature type="topological domain" description="Periplasmic" evidence="1">
    <location>
        <begin position="30"/>
        <end position="159"/>
    </location>
</feature>
<feature type="binding site" description="covalent" evidence="1">
    <location>
        <position position="130"/>
    </location>
    <ligand>
        <name>heme</name>
        <dbReference type="ChEBI" id="CHEBI:30413"/>
    </ligand>
</feature>
<feature type="binding site" description="axial binding residue" evidence="1">
    <location>
        <position position="134"/>
    </location>
    <ligand>
        <name>heme</name>
        <dbReference type="ChEBI" id="CHEBI:30413"/>
    </ligand>
    <ligandPart>
        <name>Fe</name>
        <dbReference type="ChEBI" id="CHEBI:18248"/>
    </ligandPart>
</feature>
<sequence>MNPRRKKRLLVIVAVLFGIGASIGLVLYALQENINLFYTPSELVDGKGPNKEKPQIGQKLRIGGMVVPGSVERNEQSLKVSFTLVDTGPTVVVRYQGILPDLFREGQGIVAQGVLVEPNVIEAFEVLAKHDEEYMPAEVAEALKGIKHEKPKYNLDSGN</sequence>
<gene>
    <name evidence="1" type="primary">ccmE</name>
    <name evidence="1" type="synonym">cycJ</name>
    <name type="ordered locus">PSHAa0826</name>
</gene>
<protein>
    <recommendedName>
        <fullName evidence="1">Cytochrome c-type biogenesis protein CcmE</fullName>
    </recommendedName>
    <alternativeName>
        <fullName evidence="1">Cytochrome c maturation protein E</fullName>
    </alternativeName>
    <alternativeName>
        <fullName evidence="1">Heme chaperone CcmE</fullName>
    </alternativeName>
</protein>